<evidence type="ECO:0000255" key="1"/>
<evidence type="ECO:0000269" key="2">
    <source>
    </source>
</evidence>
<evidence type="ECO:0000269" key="3">
    <source>
    </source>
</evidence>
<evidence type="ECO:0000305" key="4">
    <source>
    </source>
</evidence>
<evidence type="ECO:0000305" key="5">
    <source>
    </source>
</evidence>
<reference key="1">
    <citation type="journal article" date="1995" name="Nucleic Acids Res.">
        <title>Analysis of the Escherichia coli genome VI: DNA sequence of the region from 92.8 through 100 minutes.</title>
        <authorList>
            <person name="Burland V.D."/>
            <person name="Plunkett G. III"/>
            <person name="Sofia H.J."/>
            <person name="Daniels D.L."/>
            <person name="Blattner F.R."/>
        </authorList>
    </citation>
    <scope>NUCLEOTIDE SEQUENCE [LARGE SCALE GENOMIC DNA]</scope>
    <source>
        <strain>K12 / MG1655 / ATCC 47076</strain>
    </source>
</reference>
<reference key="2">
    <citation type="journal article" date="1997" name="Science">
        <title>The complete genome sequence of Escherichia coli K-12.</title>
        <authorList>
            <person name="Blattner F.R."/>
            <person name="Plunkett G. III"/>
            <person name="Bloch C.A."/>
            <person name="Perna N.T."/>
            <person name="Burland V."/>
            <person name="Riley M."/>
            <person name="Collado-Vides J."/>
            <person name="Glasner J.D."/>
            <person name="Rode C.K."/>
            <person name="Mayhew G.F."/>
            <person name="Gregor J."/>
            <person name="Davis N.W."/>
            <person name="Kirkpatrick H.A."/>
            <person name="Goeden M.A."/>
            <person name="Rose D.J."/>
            <person name="Mau B."/>
            <person name="Shao Y."/>
        </authorList>
    </citation>
    <scope>NUCLEOTIDE SEQUENCE [LARGE SCALE GENOMIC DNA]</scope>
    <source>
        <strain>K12 / MG1655 / ATCC 47076</strain>
    </source>
</reference>
<reference key="3">
    <citation type="journal article" date="2006" name="Mol. Syst. Biol.">
        <title>Highly accurate genome sequences of Escherichia coli K-12 strains MG1655 and W3110.</title>
        <authorList>
            <person name="Hayashi K."/>
            <person name="Morooka N."/>
            <person name="Yamamoto Y."/>
            <person name="Fujita K."/>
            <person name="Isono K."/>
            <person name="Choi S."/>
            <person name="Ohtsubo E."/>
            <person name="Baba T."/>
            <person name="Wanner B.L."/>
            <person name="Mori H."/>
            <person name="Horiuchi T."/>
        </authorList>
    </citation>
    <scope>NUCLEOTIDE SEQUENCE [LARGE SCALE GENOMIC DNA]</scope>
    <source>
        <strain>K12 / W3110 / ATCC 27325 / DSM 5911</strain>
    </source>
</reference>
<reference key="4">
    <citation type="journal article" date="2005" name="J. Bacteriol.">
        <title>Function and expression of an N-acetylneuraminic acid-inducible outer membrane channel in Escherichia coli.</title>
        <authorList>
            <person name="Condemine G."/>
            <person name="Berrier C."/>
            <person name="Plumbridge J."/>
            <person name="Ghazi A."/>
        </authorList>
    </citation>
    <scope>INDUCTION BY N-ACETYLNEURAMINATE</scope>
</reference>
<reference key="5">
    <citation type="journal article" date="2009" name="J. Bacteriol.">
        <title>YjhS (NanS) is required for Escherichia coli to grow on 9-O-acetylated N-acetylneuraminic acid.</title>
        <authorList>
            <person name="Steenbergen S.M."/>
            <person name="Jirik J.L."/>
            <person name="Vimr E.R."/>
        </authorList>
    </citation>
    <scope>FUNCTION</scope>
    <scope>DISRUPTION PHENOTYPE</scope>
    <scope>SUBCELLULAR LOCATION</scope>
    <source>
        <strain>K12 / BW30270</strain>
    </source>
</reference>
<reference key="6">
    <citation type="journal article" date="2013" name="J. Bacteriol.">
        <title>Control of the Escherichia coli sialoregulon by transcriptional repressor NanR.</title>
        <authorList>
            <person name="Kalivoda K.A."/>
            <person name="Steenbergen S.M."/>
            <person name="Vimr E.R."/>
        </authorList>
    </citation>
    <scope>INDUCTION</scope>
</reference>
<protein>
    <recommendedName>
        <fullName>Probable 9-O-acetyl-N-acetylneuraminic acid deacetylase</fullName>
        <shortName>Neu5,9Ac2 deacetylase</shortName>
        <ecNumber>3.1.1.-</ecNumber>
    </recommendedName>
    <alternativeName>
        <fullName>Probable 9-O-acetyl-N-acetylneuraminate esterase</fullName>
    </alternativeName>
    <alternativeName>
        <fullName>Probable sialyl esterase NanS</fullName>
    </alternativeName>
</protein>
<sequence>MNAIISPDYYYVLTVAGQSNAMAYGEGLPLPDREDAPHPRIKQLARFAHTHPGGPPCHFNDIIPLTHCPHDVQDMQGYHHPLATNHQTQYGTVGQALHIARKLLPFIPDNAGILIVPCCRGGSAFTAGSEGTYSERHGASHDACRWGTDTPLYQDLVSRTRAALAKNPQNKFLGACWMQGEFDLMTSDYASHPQHFNHMVEAFRRDLKQYHSQLNNITDAPWFCGDTTWYWKENFPHSYEAIYGNYQNNVLANIIFVDFQQQGERGLTNAPDEDPDDLSTGYYGSAYRSPENWTTALRSSHFSTAARRGIISDRFVEAILQFWRER</sequence>
<proteinExistence type="evidence at transcript level"/>
<name>NANS_ECOLI</name>
<dbReference type="EC" id="3.1.1.-"/>
<dbReference type="EMBL" id="U14003">
    <property type="protein sequence ID" value="AAA97205.1"/>
    <property type="molecule type" value="Genomic_DNA"/>
</dbReference>
<dbReference type="EMBL" id="U00096">
    <property type="protein sequence ID" value="AAC77265.1"/>
    <property type="molecule type" value="Genomic_DNA"/>
</dbReference>
<dbReference type="EMBL" id="AP009048">
    <property type="protein sequence ID" value="BAE78302.1"/>
    <property type="molecule type" value="Genomic_DNA"/>
</dbReference>
<dbReference type="PIR" id="S56534">
    <property type="entry name" value="S56534"/>
</dbReference>
<dbReference type="RefSeq" id="NP_418729.1">
    <property type="nucleotide sequence ID" value="NC_000913.3"/>
</dbReference>
<dbReference type="RefSeq" id="WP_000991438.1">
    <property type="nucleotide sequence ID" value="NZ_SSUV01000012.1"/>
</dbReference>
<dbReference type="SMR" id="P39370"/>
<dbReference type="BioGRID" id="4259373">
    <property type="interactions" value="13"/>
</dbReference>
<dbReference type="DIP" id="DIP-12627N"/>
<dbReference type="FunCoup" id="P39370">
    <property type="interactions" value="3"/>
</dbReference>
<dbReference type="STRING" id="511145.b4309"/>
<dbReference type="PaxDb" id="511145-b4309"/>
<dbReference type="EnsemblBacteria" id="AAC77265">
    <property type="protein sequence ID" value="AAC77265"/>
    <property type="gene ID" value="b4309"/>
</dbReference>
<dbReference type="GeneID" id="948835"/>
<dbReference type="KEGG" id="ecj:JW4272"/>
<dbReference type="KEGG" id="eco:b4309"/>
<dbReference type="KEGG" id="ecoc:C3026_23265"/>
<dbReference type="PATRIC" id="fig|1411691.4.peg.2384"/>
<dbReference type="EchoBASE" id="EB2449"/>
<dbReference type="eggNOG" id="ENOG502ZIWU">
    <property type="taxonomic scope" value="Bacteria"/>
</dbReference>
<dbReference type="HOGENOM" id="CLU_014323_0_1_6"/>
<dbReference type="InParanoid" id="P39370"/>
<dbReference type="OMA" id="ARFTHTH"/>
<dbReference type="OrthoDB" id="6936458at2"/>
<dbReference type="BioCyc" id="EcoCyc:G7919-MONOMER"/>
<dbReference type="BioCyc" id="MetaCyc:G7919-MONOMER"/>
<dbReference type="BRENDA" id="3.1.1.53">
    <property type="organism ID" value="2026"/>
</dbReference>
<dbReference type="PRO" id="PR:P39370"/>
<dbReference type="Proteomes" id="UP000000625">
    <property type="component" value="Chromosome"/>
</dbReference>
<dbReference type="GO" id="GO:0042597">
    <property type="term" value="C:periplasmic space"/>
    <property type="evidence" value="ECO:0007669"/>
    <property type="project" value="UniProtKB-SubCell"/>
</dbReference>
<dbReference type="GO" id="GO:0001681">
    <property type="term" value="F:sialate O-acetylesterase activity"/>
    <property type="evidence" value="ECO:0000314"/>
    <property type="project" value="EcoCyc"/>
</dbReference>
<dbReference type="GO" id="GO:0019752">
    <property type="term" value="P:carboxylic acid metabolic process"/>
    <property type="evidence" value="ECO:0000315"/>
    <property type="project" value="EcoCyc"/>
</dbReference>
<dbReference type="GO" id="GO:0006054">
    <property type="term" value="P:N-acetylneuraminate metabolic process"/>
    <property type="evidence" value="ECO:0000315"/>
    <property type="project" value="EcoCyc"/>
</dbReference>
<dbReference type="FunFam" id="3.40.50.1110:FF:000016">
    <property type="entry name" value="9-O-acetyl-N-acetylneuraminic acid deacetylase"/>
    <property type="match status" value="1"/>
</dbReference>
<dbReference type="Gene3D" id="3.40.50.1110">
    <property type="entry name" value="SGNH hydrolase"/>
    <property type="match status" value="1"/>
</dbReference>
<dbReference type="InterPro" id="IPR052940">
    <property type="entry name" value="Carb_Esterase_6"/>
</dbReference>
<dbReference type="InterPro" id="IPR005181">
    <property type="entry name" value="SASA"/>
</dbReference>
<dbReference type="InterPro" id="IPR036514">
    <property type="entry name" value="SGNH_hydro_sf"/>
</dbReference>
<dbReference type="PANTHER" id="PTHR31988:SF19">
    <property type="entry name" value="9-O-ACETYL-N-ACETYLNEURAMINIC ACID DEACETYLASE-RELATED"/>
    <property type="match status" value="1"/>
</dbReference>
<dbReference type="PANTHER" id="PTHR31988">
    <property type="entry name" value="ESTERASE, PUTATIVE (DUF303)-RELATED"/>
    <property type="match status" value="1"/>
</dbReference>
<dbReference type="Pfam" id="PF03629">
    <property type="entry name" value="SASA"/>
    <property type="match status" value="1"/>
</dbReference>
<dbReference type="SUPFAM" id="SSF52266">
    <property type="entry name" value="SGNH hydrolase"/>
    <property type="match status" value="1"/>
</dbReference>
<comment type="function">
    <text evidence="2">Probably catalyzes the hydrolysis of the 9-O-acetyl group of 9-O-acetyl-N-acetylneuraminate (Neu5,9Ac2). Is required for growth of E.coli on Neu5,9Ac2, an alternative sialic acid commonly found in mammalian host mucosal sites, in particular in the human intestine.</text>
</comment>
<comment type="subcellular location">
    <subcellularLocation>
        <location evidence="5">Periplasm</location>
    </subcellularLocation>
</comment>
<comment type="induction">
    <text evidence="3 4">Induced by N-acetylneuraminate and modulated by N-acetylglucosamine, via the NanR and NagC regulators.</text>
</comment>
<comment type="disruption phenotype">
    <text evidence="2">Cells lacking this gene cannot grow on Neu5,9Ac2 as the sole carbon source, in contrast to wild-type, but grow as well as wild-type on glycerol or on N-acetylneuraminate (Neu5Ac).</text>
</comment>
<accession>P39370</accession>
<accession>Q2M604</accession>
<organism>
    <name type="scientific">Escherichia coli (strain K12)</name>
    <dbReference type="NCBI Taxonomy" id="83333"/>
    <lineage>
        <taxon>Bacteria</taxon>
        <taxon>Pseudomonadati</taxon>
        <taxon>Pseudomonadota</taxon>
        <taxon>Gammaproteobacteria</taxon>
        <taxon>Enterobacterales</taxon>
        <taxon>Enterobacteriaceae</taxon>
        <taxon>Escherichia</taxon>
    </lineage>
</organism>
<feature type="signal peptide" evidence="1">
    <location>
        <begin position="1"/>
        <end position="21"/>
    </location>
</feature>
<feature type="chain" id="PRO_0000013942" description="Probable 9-O-acetyl-N-acetylneuraminic acid deacetylase">
    <location>
        <begin position="22"/>
        <end position="326"/>
    </location>
</feature>
<gene>
    <name type="primary">nanS</name>
    <name type="synonym">yjhS</name>
    <name type="ordered locus">b4309</name>
    <name type="ordered locus">JW4272</name>
</gene>
<keyword id="KW-0119">Carbohydrate metabolism</keyword>
<keyword id="KW-0378">Hydrolase</keyword>
<keyword id="KW-0574">Periplasm</keyword>
<keyword id="KW-1185">Reference proteome</keyword>
<keyword id="KW-0732">Signal</keyword>